<sequence length="437" mass="49200">MTTEASNPEVNATAEVAVPVNPLLRSVTVEIPSDVVDAERNKHVQQYAKLARVPGFRKGKVPPSVIRTRFAQDINEEIVRTLIPHYFREETGKQNLQPVSQPQVTDLHLHDGEPLKFTAEFEILPEIPTTGYENIKVEHPPVEVTDAEIEDTIKSLQEQRATYDPIEDRAAEDGDFVQISFEGRDKSDPEAKPVEVPSIMVELGGSNTVQEFTENLRGTKAGDEKTFDVVYPADYGDQRLAGKSVEYHVSVKSLKKKIFPELDEAFISELGADVKTPDELRAKIREGAEHEKKHHAEHEGKDKLVDALVKLNDFPVPESMVNSQIEIRLERGLRALAQQGMRTEDMKKMDFGKLREGQREAATREVKASLLLEKIADAEKIEVSDEELDRQIAGLARQSQQSPEQVRARLTQDGSLDRIRTQIRNEKTLDLLYSRSA</sequence>
<evidence type="ECO:0000255" key="1">
    <source>
        <dbReference type="HAMAP-Rule" id="MF_00303"/>
    </source>
</evidence>
<dbReference type="EC" id="5.2.1.8" evidence="1"/>
<dbReference type="EMBL" id="CP000360">
    <property type="protein sequence ID" value="ABF40563.1"/>
    <property type="molecule type" value="Genomic_DNA"/>
</dbReference>
<dbReference type="RefSeq" id="WP_011522365.1">
    <property type="nucleotide sequence ID" value="NC_008009.1"/>
</dbReference>
<dbReference type="SMR" id="Q1IRD7"/>
<dbReference type="STRING" id="204669.Acid345_1561"/>
<dbReference type="EnsemblBacteria" id="ABF40563">
    <property type="protein sequence ID" value="ABF40563"/>
    <property type="gene ID" value="Acid345_1561"/>
</dbReference>
<dbReference type="KEGG" id="aba:Acid345_1561"/>
<dbReference type="eggNOG" id="COG0544">
    <property type="taxonomic scope" value="Bacteria"/>
</dbReference>
<dbReference type="HOGENOM" id="CLU_033058_2_0_0"/>
<dbReference type="OrthoDB" id="9767721at2"/>
<dbReference type="Proteomes" id="UP000002432">
    <property type="component" value="Chromosome"/>
</dbReference>
<dbReference type="GO" id="GO:0005737">
    <property type="term" value="C:cytoplasm"/>
    <property type="evidence" value="ECO:0007669"/>
    <property type="project" value="UniProtKB-SubCell"/>
</dbReference>
<dbReference type="GO" id="GO:0003755">
    <property type="term" value="F:peptidyl-prolyl cis-trans isomerase activity"/>
    <property type="evidence" value="ECO:0007669"/>
    <property type="project" value="UniProtKB-UniRule"/>
</dbReference>
<dbReference type="GO" id="GO:0044183">
    <property type="term" value="F:protein folding chaperone"/>
    <property type="evidence" value="ECO:0007669"/>
    <property type="project" value="TreeGrafter"/>
</dbReference>
<dbReference type="GO" id="GO:0043022">
    <property type="term" value="F:ribosome binding"/>
    <property type="evidence" value="ECO:0007669"/>
    <property type="project" value="TreeGrafter"/>
</dbReference>
<dbReference type="GO" id="GO:0051083">
    <property type="term" value="P:'de novo' cotranslational protein folding"/>
    <property type="evidence" value="ECO:0007669"/>
    <property type="project" value="TreeGrafter"/>
</dbReference>
<dbReference type="GO" id="GO:0051301">
    <property type="term" value="P:cell division"/>
    <property type="evidence" value="ECO:0007669"/>
    <property type="project" value="UniProtKB-KW"/>
</dbReference>
<dbReference type="GO" id="GO:0061077">
    <property type="term" value="P:chaperone-mediated protein folding"/>
    <property type="evidence" value="ECO:0007669"/>
    <property type="project" value="TreeGrafter"/>
</dbReference>
<dbReference type="GO" id="GO:0015031">
    <property type="term" value="P:protein transport"/>
    <property type="evidence" value="ECO:0007669"/>
    <property type="project" value="UniProtKB-UniRule"/>
</dbReference>
<dbReference type="GO" id="GO:0043335">
    <property type="term" value="P:protein unfolding"/>
    <property type="evidence" value="ECO:0007669"/>
    <property type="project" value="TreeGrafter"/>
</dbReference>
<dbReference type="Gene3D" id="3.10.50.40">
    <property type="match status" value="1"/>
</dbReference>
<dbReference type="Gene3D" id="3.30.70.1050">
    <property type="entry name" value="Trigger factor ribosome-binding domain"/>
    <property type="match status" value="1"/>
</dbReference>
<dbReference type="Gene3D" id="1.10.3120.10">
    <property type="entry name" value="Trigger factor, C-terminal domain"/>
    <property type="match status" value="1"/>
</dbReference>
<dbReference type="HAMAP" id="MF_00303">
    <property type="entry name" value="Trigger_factor_Tig"/>
    <property type="match status" value="1"/>
</dbReference>
<dbReference type="InterPro" id="IPR046357">
    <property type="entry name" value="PPIase_dom_sf"/>
</dbReference>
<dbReference type="InterPro" id="IPR001179">
    <property type="entry name" value="PPIase_FKBP_dom"/>
</dbReference>
<dbReference type="InterPro" id="IPR005215">
    <property type="entry name" value="Trig_fac"/>
</dbReference>
<dbReference type="InterPro" id="IPR008880">
    <property type="entry name" value="Trigger_fac_C"/>
</dbReference>
<dbReference type="InterPro" id="IPR037041">
    <property type="entry name" value="Trigger_fac_C_sf"/>
</dbReference>
<dbReference type="InterPro" id="IPR008881">
    <property type="entry name" value="Trigger_fac_ribosome-bd_bac"/>
</dbReference>
<dbReference type="InterPro" id="IPR036611">
    <property type="entry name" value="Trigger_fac_ribosome-bd_sf"/>
</dbReference>
<dbReference type="InterPro" id="IPR027304">
    <property type="entry name" value="Trigger_fact/SurA_dom_sf"/>
</dbReference>
<dbReference type="NCBIfam" id="TIGR00115">
    <property type="entry name" value="tig"/>
    <property type="match status" value="1"/>
</dbReference>
<dbReference type="PANTHER" id="PTHR30560">
    <property type="entry name" value="TRIGGER FACTOR CHAPERONE AND PEPTIDYL-PROLYL CIS/TRANS ISOMERASE"/>
    <property type="match status" value="1"/>
</dbReference>
<dbReference type="PANTHER" id="PTHR30560:SF3">
    <property type="entry name" value="TRIGGER FACTOR-LIKE PROTEIN TIG, CHLOROPLASTIC"/>
    <property type="match status" value="1"/>
</dbReference>
<dbReference type="Pfam" id="PF00254">
    <property type="entry name" value="FKBP_C"/>
    <property type="match status" value="1"/>
</dbReference>
<dbReference type="Pfam" id="PF05698">
    <property type="entry name" value="Trigger_C"/>
    <property type="match status" value="1"/>
</dbReference>
<dbReference type="Pfam" id="PF05697">
    <property type="entry name" value="Trigger_N"/>
    <property type="match status" value="1"/>
</dbReference>
<dbReference type="PIRSF" id="PIRSF003095">
    <property type="entry name" value="Trigger_factor"/>
    <property type="match status" value="1"/>
</dbReference>
<dbReference type="SUPFAM" id="SSF54534">
    <property type="entry name" value="FKBP-like"/>
    <property type="match status" value="1"/>
</dbReference>
<dbReference type="SUPFAM" id="SSF109998">
    <property type="entry name" value="Triger factor/SurA peptide-binding domain-like"/>
    <property type="match status" value="1"/>
</dbReference>
<dbReference type="SUPFAM" id="SSF102735">
    <property type="entry name" value="Trigger factor ribosome-binding domain"/>
    <property type="match status" value="1"/>
</dbReference>
<accession>Q1IRD7</accession>
<feature type="chain" id="PRO_0000256524" description="Trigger factor">
    <location>
        <begin position="1"/>
        <end position="437"/>
    </location>
</feature>
<feature type="domain" description="PPIase FKBP-type" evidence="1">
    <location>
        <begin position="174"/>
        <end position="260"/>
    </location>
</feature>
<organism>
    <name type="scientific">Koribacter versatilis (strain Ellin345)</name>
    <dbReference type="NCBI Taxonomy" id="204669"/>
    <lineage>
        <taxon>Bacteria</taxon>
        <taxon>Pseudomonadati</taxon>
        <taxon>Acidobacteriota</taxon>
        <taxon>Terriglobia</taxon>
        <taxon>Terriglobales</taxon>
        <taxon>Candidatus Korobacteraceae</taxon>
        <taxon>Candidatus Korobacter</taxon>
    </lineage>
</organism>
<comment type="function">
    <text evidence="1">Involved in protein export. Acts as a chaperone by maintaining the newly synthesized protein in an open conformation. Functions as a peptidyl-prolyl cis-trans isomerase.</text>
</comment>
<comment type="catalytic activity">
    <reaction evidence="1">
        <text>[protein]-peptidylproline (omega=180) = [protein]-peptidylproline (omega=0)</text>
        <dbReference type="Rhea" id="RHEA:16237"/>
        <dbReference type="Rhea" id="RHEA-COMP:10747"/>
        <dbReference type="Rhea" id="RHEA-COMP:10748"/>
        <dbReference type="ChEBI" id="CHEBI:83833"/>
        <dbReference type="ChEBI" id="CHEBI:83834"/>
        <dbReference type="EC" id="5.2.1.8"/>
    </reaction>
</comment>
<comment type="subcellular location">
    <subcellularLocation>
        <location>Cytoplasm</location>
    </subcellularLocation>
    <text evidence="1">About half TF is bound to the ribosome near the polypeptide exit tunnel while the other half is free in the cytoplasm.</text>
</comment>
<comment type="domain">
    <text evidence="1">Consists of 3 domains; the N-terminus binds the ribosome, the middle domain has PPIase activity, while the C-terminus has intrinsic chaperone activity on its own.</text>
</comment>
<comment type="similarity">
    <text evidence="1">Belongs to the FKBP-type PPIase family. Tig subfamily.</text>
</comment>
<protein>
    <recommendedName>
        <fullName evidence="1">Trigger factor</fullName>
        <shortName evidence="1">TF</shortName>
        <ecNumber evidence="1">5.2.1.8</ecNumber>
    </recommendedName>
    <alternativeName>
        <fullName evidence="1">PPIase</fullName>
    </alternativeName>
</protein>
<proteinExistence type="inferred from homology"/>
<reference key="1">
    <citation type="journal article" date="2009" name="Appl. Environ. Microbiol.">
        <title>Three genomes from the phylum Acidobacteria provide insight into the lifestyles of these microorganisms in soils.</title>
        <authorList>
            <person name="Ward N.L."/>
            <person name="Challacombe J.F."/>
            <person name="Janssen P.H."/>
            <person name="Henrissat B."/>
            <person name="Coutinho P.M."/>
            <person name="Wu M."/>
            <person name="Xie G."/>
            <person name="Haft D.H."/>
            <person name="Sait M."/>
            <person name="Badger J."/>
            <person name="Barabote R.D."/>
            <person name="Bradley B."/>
            <person name="Brettin T.S."/>
            <person name="Brinkac L.M."/>
            <person name="Bruce D."/>
            <person name="Creasy T."/>
            <person name="Daugherty S.C."/>
            <person name="Davidsen T.M."/>
            <person name="DeBoy R.T."/>
            <person name="Detter J.C."/>
            <person name="Dodson R.J."/>
            <person name="Durkin A.S."/>
            <person name="Ganapathy A."/>
            <person name="Gwinn-Giglio M."/>
            <person name="Han C.S."/>
            <person name="Khouri H."/>
            <person name="Kiss H."/>
            <person name="Kothari S.P."/>
            <person name="Madupu R."/>
            <person name="Nelson K.E."/>
            <person name="Nelson W.C."/>
            <person name="Paulsen I."/>
            <person name="Penn K."/>
            <person name="Ren Q."/>
            <person name="Rosovitz M.J."/>
            <person name="Selengut J.D."/>
            <person name="Shrivastava S."/>
            <person name="Sullivan S.A."/>
            <person name="Tapia R."/>
            <person name="Thompson L.S."/>
            <person name="Watkins K.L."/>
            <person name="Yang Q."/>
            <person name="Yu C."/>
            <person name="Zafar N."/>
            <person name="Zhou L."/>
            <person name="Kuske C.R."/>
        </authorList>
    </citation>
    <scope>NUCLEOTIDE SEQUENCE [LARGE SCALE GENOMIC DNA]</scope>
    <source>
        <strain>Ellin345</strain>
    </source>
</reference>
<gene>
    <name evidence="1" type="primary">tig</name>
    <name type="ordered locus">Acid345_1561</name>
</gene>
<keyword id="KW-0131">Cell cycle</keyword>
<keyword id="KW-0132">Cell division</keyword>
<keyword id="KW-0143">Chaperone</keyword>
<keyword id="KW-0963">Cytoplasm</keyword>
<keyword id="KW-0413">Isomerase</keyword>
<keyword id="KW-1185">Reference proteome</keyword>
<keyword id="KW-0697">Rotamase</keyword>
<name>TIG_KORVE</name>